<evidence type="ECO:0000255" key="1">
    <source>
        <dbReference type="HAMAP-Rule" id="MF_01039"/>
    </source>
</evidence>
<proteinExistence type="inferred from homology"/>
<keyword id="KW-0312">Gluconeogenesis</keyword>
<keyword id="KW-0324">Glycolysis</keyword>
<keyword id="KW-0413">Isomerase</keyword>
<feature type="chain" id="PRO_1000135972" description="2,3-bisphosphoglycerate-dependent phosphoglycerate mutase">
    <location>
        <begin position="1"/>
        <end position="250"/>
    </location>
</feature>
<feature type="active site" description="Tele-phosphohistidine intermediate" evidence="1">
    <location>
        <position position="11"/>
    </location>
</feature>
<feature type="active site" description="Proton donor/acceptor" evidence="1">
    <location>
        <position position="89"/>
    </location>
</feature>
<feature type="binding site" evidence="1">
    <location>
        <begin position="10"/>
        <end position="17"/>
    </location>
    <ligand>
        <name>substrate</name>
    </ligand>
</feature>
<feature type="binding site" evidence="1">
    <location>
        <begin position="23"/>
        <end position="24"/>
    </location>
    <ligand>
        <name>substrate</name>
    </ligand>
</feature>
<feature type="binding site" evidence="1">
    <location>
        <position position="62"/>
    </location>
    <ligand>
        <name>substrate</name>
    </ligand>
</feature>
<feature type="binding site" evidence="1">
    <location>
        <begin position="89"/>
        <end position="92"/>
    </location>
    <ligand>
        <name>substrate</name>
    </ligand>
</feature>
<feature type="binding site" evidence="1">
    <location>
        <position position="100"/>
    </location>
    <ligand>
        <name>substrate</name>
    </ligand>
</feature>
<feature type="binding site" evidence="1">
    <location>
        <begin position="116"/>
        <end position="117"/>
    </location>
    <ligand>
        <name>substrate</name>
    </ligand>
</feature>
<feature type="binding site" evidence="1">
    <location>
        <begin position="185"/>
        <end position="186"/>
    </location>
    <ligand>
        <name>substrate</name>
    </ligand>
</feature>
<feature type="site" description="Transition state stabilizer" evidence="1">
    <location>
        <position position="184"/>
    </location>
</feature>
<gene>
    <name evidence="1" type="primary">gpmA</name>
    <name type="ordered locus">SEN0717</name>
</gene>
<accession>B5QX43</accession>
<protein>
    <recommendedName>
        <fullName evidence="1">2,3-bisphosphoglycerate-dependent phosphoglycerate mutase</fullName>
        <shortName evidence="1">BPG-dependent PGAM</shortName>
        <shortName evidence="1">PGAM</shortName>
        <shortName evidence="1">Phosphoglyceromutase</shortName>
        <shortName evidence="1">dPGM</shortName>
        <ecNumber evidence="1">5.4.2.11</ecNumber>
    </recommendedName>
</protein>
<name>GPMA_SALEP</name>
<organism>
    <name type="scientific">Salmonella enteritidis PT4 (strain P125109)</name>
    <dbReference type="NCBI Taxonomy" id="550537"/>
    <lineage>
        <taxon>Bacteria</taxon>
        <taxon>Pseudomonadati</taxon>
        <taxon>Pseudomonadota</taxon>
        <taxon>Gammaproteobacteria</taxon>
        <taxon>Enterobacterales</taxon>
        <taxon>Enterobacteriaceae</taxon>
        <taxon>Salmonella</taxon>
    </lineage>
</organism>
<sequence>MAVTKLVLVRHGESQWNKENRFTGWYDVDLSEKGVSEAKAAGKLLKEEGFSFDFAYTSVLKRAIHTLWNVLDELDQAWLPVEKSWKLNERHYGALQGLNKAETAEKYGDEQVKQWRRGFAVTPPELTKDDERYPGHDPRYAKLSEKELPLTESLALTIDRVIPYWNDTILPRMKSGERVIIAAHGNSLRALVKYLDNMSEDEILELNIPTGVPLVYEFDENFKPLKHYYLGNADEIAAKAAAVANQGKAK</sequence>
<reference key="1">
    <citation type="journal article" date="2008" name="Genome Res.">
        <title>Comparative genome analysis of Salmonella enteritidis PT4 and Salmonella gallinarum 287/91 provides insights into evolutionary and host adaptation pathways.</title>
        <authorList>
            <person name="Thomson N.R."/>
            <person name="Clayton D.J."/>
            <person name="Windhorst D."/>
            <person name="Vernikos G."/>
            <person name="Davidson S."/>
            <person name="Churcher C."/>
            <person name="Quail M.A."/>
            <person name="Stevens M."/>
            <person name="Jones M.A."/>
            <person name="Watson M."/>
            <person name="Barron A."/>
            <person name="Layton A."/>
            <person name="Pickard D."/>
            <person name="Kingsley R.A."/>
            <person name="Bignell A."/>
            <person name="Clark L."/>
            <person name="Harris B."/>
            <person name="Ormond D."/>
            <person name="Abdellah Z."/>
            <person name="Brooks K."/>
            <person name="Cherevach I."/>
            <person name="Chillingworth T."/>
            <person name="Woodward J."/>
            <person name="Norberczak H."/>
            <person name="Lord A."/>
            <person name="Arrowsmith C."/>
            <person name="Jagels K."/>
            <person name="Moule S."/>
            <person name="Mungall K."/>
            <person name="Saunders M."/>
            <person name="Whitehead S."/>
            <person name="Chabalgoity J.A."/>
            <person name="Maskell D."/>
            <person name="Humphreys T."/>
            <person name="Roberts M."/>
            <person name="Barrow P.A."/>
            <person name="Dougan G."/>
            <person name="Parkhill J."/>
        </authorList>
    </citation>
    <scope>NUCLEOTIDE SEQUENCE [LARGE SCALE GENOMIC DNA]</scope>
    <source>
        <strain>P125109</strain>
    </source>
</reference>
<comment type="function">
    <text evidence="1">Catalyzes the interconversion of 2-phosphoglycerate and 3-phosphoglycerate.</text>
</comment>
<comment type="catalytic activity">
    <reaction evidence="1">
        <text>(2R)-2-phosphoglycerate = (2R)-3-phosphoglycerate</text>
        <dbReference type="Rhea" id="RHEA:15901"/>
        <dbReference type="ChEBI" id="CHEBI:58272"/>
        <dbReference type="ChEBI" id="CHEBI:58289"/>
        <dbReference type="EC" id="5.4.2.11"/>
    </reaction>
</comment>
<comment type="pathway">
    <text evidence="1">Carbohydrate degradation; glycolysis; pyruvate from D-glyceraldehyde 3-phosphate: step 3/5.</text>
</comment>
<comment type="subunit">
    <text evidence="1">Homodimer.</text>
</comment>
<comment type="similarity">
    <text evidence="1">Belongs to the phosphoglycerate mutase family. BPG-dependent PGAM subfamily.</text>
</comment>
<dbReference type="EC" id="5.4.2.11" evidence="1"/>
<dbReference type="EMBL" id="AM933172">
    <property type="protein sequence ID" value="CAR32303.1"/>
    <property type="molecule type" value="Genomic_DNA"/>
</dbReference>
<dbReference type="RefSeq" id="WP_000301556.1">
    <property type="nucleotide sequence ID" value="NC_011294.1"/>
</dbReference>
<dbReference type="SMR" id="B5QX43"/>
<dbReference type="KEGG" id="set:SEN0717"/>
<dbReference type="HOGENOM" id="CLU_033323_1_1_6"/>
<dbReference type="UniPathway" id="UPA00109">
    <property type="reaction ID" value="UER00186"/>
</dbReference>
<dbReference type="Proteomes" id="UP000000613">
    <property type="component" value="Chromosome"/>
</dbReference>
<dbReference type="GO" id="GO:0004619">
    <property type="term" value="F:phosphoglycerate mutase activity"/>
    <property type="evidence" value="ECO:0007669"/>
    <property type="project" value="UniProtKB-EC"/>
</dbReference>
<dbReference type="GO" id="GO:0006094">
    <property type="term" value="P:gluconeogenesis"/>
    <property type="evidence" value="ECO:0007669"/>
    <property type="project" value="UniProtKB-UniRule"/>
</dbReference>
<dbReference type="GO" id="GO:0006096">
    <property type="term" value="P:glycolytic process"/>
    <property type="evidence" value="ECO:0007669"/>
    <property type="project" value="UniProtKB-UniRule"/>
</dbReference>
<dbReference type="CDD" id="cd07067">
    <property type="entry name" value="HP_PGM_like"/>
    <property type="match status" value="1"/>
</dbReference>
<dbReference type="FunFam" id="3.40.50.1240:FF:000003">
    <property type="entry name" value="2,3-bisphosphoglycerate-dependent phosphoglycerate mutase"/>
    <property type="match status" value="1"/>
</dbReference>
<dbReference type="Gene3D" id="3.40.50.1240">
    <property type="entry name" value="Phosphoglycerate mutase-like"/>
    <property type="match status" value="1"/>
</dbReference>
<dbReference type="HAMAP" id="MF_01039">
    <property type="entry name" value="PGAM_GpmA"/>
    <property type="match status" value="1"/>
</dbReference>
<dbReference type="InterPro" id="IPR013078">
    <property type="entry name" value="His_Pase_superF_clade-1"/>
</dbReference>
<dbReference type="InterPro" id="IPR029033">
    <property type="entry name" value="His_PPase_superfam"/>
</dbReference>
<dbReference type="InterPro" id="IPR001345">
    <property type="entry name" value="PG/BPGM_mutase_AS"/>
</dbReference>
<dbReference type="InterPro" id="IPR005952">
    <property type="entry name" value="Phosphogly_mut1"/>
</dbReference>
<dbReference type="NCBIfam" id="TIGR01258">
    <property type="entry name" value="pgm_1"/>
    <property type="match status" value="1"/>
</dbReference>
<dbReference type="NCBIfam" id="NF010713">
    <property type="entry name" value="PRK14115.1"/>
    <property type="match status" value="1"/>
</dbReference>
<dbReference type="PANTHER" id="PTHR11931">
    <property type="entry name" value="PHOSPHOGLYCERATE MUTASE"/>
    <property type="match status" value="1"/>
</dbReference>
<dbReference type="Pfam" id="PF00300">
    <property type="entry name" value="His_Phos_1"/>
    <property type="match status" value="1"/>
</dbReference>
<dbReference type="PIRSF" id="PIRSF000709">
    <property type="entry name" value="6PFK_2-Ptase"/>
    <property type="match status" value="1"/>
</dbReference>
<dbReference type="SMART" id="SM00855">
    <property type="entry name" value="PGAM"/>
    <property type="match status" value="1"/>
</dbReference>
<dbReference type="SUPFAM" id="SSF53254">
    <property type="entry name" value="Phosphoglycerate mutase-like"/>
    <property type="match status" value="1"/>
</dbReference>
<dbReference type="PROSITE" id="PS00175">
    <property type="entry name" value="PG_MUTASE"/>
    <property type="match status" value="1"/>
</dbReference>